<keyword id="KW-0056">Arginine metabolism</keyword>
<keyword id="KW-0963">Cytoplasm</keyword>
<keyword id="KW-0808">Transferase</keyword>
<organism>
    <name type="scientific">Streptococcus agalactiae serotype III (strain NEM316)</name>
    <dbReference type="NCBI Taxonomy" id="211110"/>
    <lineage>
        <taxon>Bacteria</taxon>
        <taxon>Bacillati</taxon>
        <taxon>Bacillota</taxon>
        <taxon>Bacilli</taxon>
        <taxon>Lactobacillales</taxon>
        <taxon>Streptococcaceae</taxon>
        <taxon>Streptococcus</taxon>
    </lineage>
</organism>
<reference key="1">
    <citation type="journal article" date="2002" name="Mol. Microbiol.">
        <title>Genome sequence of Streptococcus agalactiae, a pathogen causing invasive neonatal disease.</title>
        <authorList>
            <person name="Glaser P."/>
            <person name="Rusniok C."/>
            <person name="Buchrieser C."/>
            <person name="Chevalier F."/>
            <person name="Frangeul L."/>
            <person name="Msadek T."/>
            <person name="Zouine M."/>
            <person name="Couve E."/>
            <person name="Lalioui L."/>
            <person name="Poyart C."/>
            <person name="Trieu-Cuot P."/>
            <person name="Kunst F."/>
        </authorList>
    </citation>
    <scope>NUCLEOTIDE SEQUENCE [LARGE SCALE GENOMIC DNA]</scope>
    <source>
        <strain>NEM316</strain>
    </source>
</reference>
<feature type="chain" id="PRO_0000113025" description="Ornithine carbamoyltransferase 1, catabolic">
    <location>
        <begin position="1"/>
        <end position="332"/>
    </location>
</feature>
<feature type="binding site" evidence="2">
    <location>
        <begin position="56"/>
        <end position="59"/>
    </location>
    <ligand>
        <name>carbamoyl phosphate</name>
        <dbReference type="ChEBI" id="CHEBI:58228"/>
    </ligand>
</feature>
<feature type="binding site" evidence="2">
    <location>
        <position position="83"/>
    </location>
    <ligand>
        <name>carbamoyl phosphate</name>
        <dbReference type="ChEBI" id="CHEBI:58228"/>
    </ligand>
</feature>
<feature type="binding site" evidence="2">
    <location>
        <position position="107"/>
    </location>
    <ligand>
        <name>carbamoyl phosphate</name>
        <dbReference type="ChEBI" id="CHEBI:58228"/>
    </ligand>
</feature>
<feature type="binding site" evidence="2">
    <location>
        <begin position="134"/>
        <end position="137"/>
    </location>
    <ligand>
        <name>carbamoyl phosphate</name>
        <dbReference type="ChEBI" id="CHEBI:58228"/>
    </ligand>
</feature>
<feature type="binding site" evidence="2">
    <location>
        <position position="167"/>
    </location>
    <ligand>
        <name>L-ornithine</name>
        <dbReference type="ChEBI" id="CHEBI:46911"/>
    </ligand>
</feature>
<feature type="binding site" evidence="2">
    <location>
        <position position="231"/>
    </location>
    <ligand>
        <name>L-ornithine</name>
        <dbReference type="ChEBI" id="CHEBI:46911"/>
    </ligand>
</feature>
<feature type="binding site" evidence="2">
    <location>
        <begin position="235"/>
        <end position="236"/>
    </location>
    <ligand>
        <name>L-ornithine</name>
        <dbReference type="ChEBI" id="CHEBI:46911"/>
    </ligand>
</feature>
<feature type="binding site" evidence="2">
    <location>
        <begin position="273"/>
        <end position="274"/>
    </location>
    <ligand>
        <name>carbamoyl phosphate</name>
        <dbReference type="ChEBI" id="CHEBI:58228"/>
    </ligand>
</feature>
<feature type="binding site" evidence="2">
    <location>
        <position position="318"/>
    </location>
    <ligand>
        <name>carbamoyl phosphate</name>
        <dbReference type="ChEBI" id="CHEBI:58228"/>
    </ligand>
</feature>
<accession>P65603</accession>
<accession>Q8DWT7</accession>
<accession>Q8E2N7</accession>
<name>OTCC1_STRA3</name>
<gene>
    <name type="primary">arcB1</name>
    <name type="ordered locus">gbs2085</name>
</gene>
<protein>
    <recommendedName>
        <fullName>Ornithine carbamoyltransferase 1, catabolic</fullName>
        <shortName>OTCase 1</shortName>
        <ecNumber>2.1.3.3</ecNumber>
    </recommendedName>
</protein>
<comment type="function">
    <text evidence="1">Reversibly catalyzes the transfer of the carbamoyl group from carbamoyl phosphate (CP) to the N(epsilon) atom of ornithine (ORN) to produce L-citrulline.</text>
</comment>
<comment type="catalytic activity">
    <reaction>
        <text>carbamoyl phosphate + L-ornithine = L-citrulline + phosphate + H(+)</text>
        <dbReference type="Rhea" id="RHEA:19513"/>
        <dbReference type="ChEBI" id="CHEBI:15378"/>
        <dbReference type="ChEBI" id="CHEBI:43474"/>
        <dbReference type="ChEBI" id="CHEBI:46911"/>
        <dbReference type="ChEBI" id="CHEBI:57743"/>
        <dbReference type="ChEBI" id="CHEBI:58228"/>
        <dbReference type="EC" id="2.1.3.3"/>
    </reaction>
</comment>
<comment type="pathway">
    <text>Amino-acid degradation; L-arginine degradation via ADI pathway; carbamoyl phosphate from L-arginine: step 2/2.</text>
</comment>
<comment type="subcellular location">
    <subcellularLocation>
        <location evidence="1">Cytoplasm</location>
    </subcellularLocation>
</comment>
<comment type="similarity">
    <text evidence="3">Belongs to the aspartate/ornithine carbamoyltransferase superfamily. OTCase family.</text>
</comment>
<proteinExistence type="inferred from homology"/>
<sequence>MKNLRNRSFLTLLDFSTAEVEFLLKLSEDLKRAKYAGIEQQKLVGKNIALIFEKDSTRTRCAFEVAAHDQGAHVTYLGPTGSQMGKKETSKDTARVLGGMYDGIEYRGFSQETVETLAEFSGVPVWNGLTDADHPTQVLADFLTAKECLHKPYKDIRFTYVGDGRNNVANALMIGASIVGMTYHLVCPKELEPDPELLSKCQEIAKTTGASIEITADIAEGVRDSDVLYTDVWVSMGEPDEVWKERIALLEPYRITQEMLNMTENPNVIFEHCLPSFHNIDTKVGYDIYEKYGLKEMEVSDEVFEGPHSVVFQEAENRMHTIKAVMVATLGD</sequence>
<evidence type="ECO:0000250" key="1"/>
<evidence type="ECO:0000255" key="2">
    <source>
        <dbReference type="HAMAP-Rule" id="MF_01109"/>
    </source>
</evidence>
<evidence type="ECO:0000305" key="3"/>
<dbReference type="EC" id="2.1.3.3"/>
<dbReference type="EMBL" id="AL766856">
    <property type="protein sequence ID" value="CAD47744.1"/>
    <property type="molecule type" value="Genomic_DNA"/>
</dbReference>
<dbReference type="SMR" id="P65603"/>
<dbReference type="KEGG" id="san:gbs2085"/>
<dbReference type="eggNOG" id="COG0078">
    <property type="taxonomic scope" value="Bacteria"/>
</dbReference>
<dbReference type="HOGENOM" id="CLU_043846_3_1_9"/>
<dbReference type="UniPathway" id="UPA00254">
    <property type="reaction ID" value="UER00365"/>
</dbReference>
<dbReference type="Proteomes" id="UP000000823">
    <property type="component" value="Chromosome"/>
</dbReference>
<dbReference type="GO" id="GO:0005737">
    <property type="term" value="C:cytoplasm"/>
    <property type="evidence" value="ECO:0007669"/>
    <property type="project" value="UniProtKB-SubCell"/>
</dbReference>
<dbReference type="GO" id="GO:0016597">
    <property type="term" value="F:amino acid binding"/>
    <property type="evidence" value="ECO:0007669"/>
    <property type="project" value="InterPro"/>
</dbReference>
<dbReference type="GO" id="GO:0004585">
    <property type="term" value="F:ornithine carbamoyltransferase activity"/>
    <property type="evidence" value="ECO:0007669"/>
    <property type="project" value="UniProtKB-UniRule"/>
</dbReference>
<dbReference type="GO" id="GO:0042450">
    <property type="term" value="P:arginine biosynthetic process via ornithine"/>
    <property type="evidence" value="ECO:0007669"/>
    <property type="project" value="TreeGrafter"/>
</dbReference>
<dbReference type="GO" id="GO:0019547">
    <property type="term" value="P:arginine catabolic process to ornithine"/>
    <property type="evidence" value="ECO:0007669"/>
    <property type="project" value="UniProtKB-UniRule"/>
</dbReference>
<dbReference type="GO" id="GO:0019240">
    <property type="term" value="P:citrulline biosynthetic process"/>
    <property type="evidence" value="ECO:0007669"/>
    <property type="project" value="TreeGrafter"/>
</dbReference>
<dbReference type="Gene3D" id="3.40.50.1370">
    <property type="entry name" value="Aspartate/ornithine carbamoyltransferase"/>
    <property type="match status" value="2"/>
</dbReference>
<dbReference type="HAMAP" id="MF_01109">
    <property type="entry name" value="OTCase"/>
    <property type="match status" value="1"/>
</dbReference>
<dbReference type="InterPro" id="IPR006132">
    <property type="entry name" value="Asp/Orn_carbamoyltranf_P-bd"/>
</dbReference>
<dbReference type="InterPro" id="IPR006130">
    <property type="entry name" value="Asp/Orn_carbamoylTrfase"/>
</dbReference>
<dbReference type="InterPro" id="IPR036901">
    <property type="entry name" value="Asp/Orn_carbamoylTrfase_sf"/>
</dbReference>
<dbReference type="InterPro" id="IPR006131">
    <property type="entry name" value="Asp_carbamoyltransf_Asp/Orn-bd"/>
</dbReference>
<dbReference type="InterPro" id="IPR002292">
    <property type="entry name" value="Orn/put_carbamltrans"/>
</dbReference>
<dbReference type="InterPro" id="IPR024904">
    <property type="entry name" value="OTCase_ArgI"/>
</dbReference>
<dbReference type="NCBIfam" id="TIGR00658">
    <property type="entry name" value="orni_carb_tr"/>
    <property type="match status" value="1"/>
</dbReference>
<dbReference type="NCBIfam" id="NF001986">
    <property type="entry name" value="PRK00779.1"/>
    <property type="match status" value="1"/>
</dbReference>
<dbReference type="NCBIfam" id="NF003286">
    <property type="entry name" value="PRK04284.1"/>
    <property type="match status" value="1"/>
</dbReference>
<dbReference type="PANTHER" id="PTHR45753:SF2">
    <property type="entry name" value="ORNITHINE CARBAMOYLTRANSFERASE"/>
    <property type="match status" value="1"/>
</dbReference>
<dbReference type="PANTHER" id="PTHR45753">
    <property type="entry name" value="ORNITHINE CARBAMOYLTRANSFERASE, MITOCHONDRIAL"/>
    <property type="match status" value="1"/>
</dbReference>
<dbReference type="Pfam" id="PF00185">
    <property type="entry name" value="OTCace"/>
    <property type="match status" value="1"/>
</dbReference>
<dbReference type="Pfam" id="PF02729">
    <property type="entry name" value="OTCace_N"/>
    <property type="match status" value="1"/>
</dbReference>
<dbReference type="PRINTS" id="PR00100">
    <property type="entry name" value="AOTCASE"/>
</dbReference>
<dbReference type="PRINTS" id="PR00102">
    <property type="entry name" value="OTCASE"/>
</dbReference>
<dbReference type="SUPFAM" id="SSF53671">
    <property type="entry name" value="Aspartate/ornithine carbamoyltransferase"/>
    <property type="match status" value="1"/>
</dbReference>
<dbReference type="PROSITE" id="PS00097">
    <property type="entry name" value="CARBAMOYLTRANSFERASE"/>
    <property type="match status" value="1"/>
</dbReference>